<dbReference type="EC" id="2.7.11.1" evidence="1"/>
<dbReference type="EMBL" id="BA000033">
    <property type="protein sequence ID" value="BAB95854.1"/>
    <property type="molecule type" value="Genomic_DNA"/>
</dbReference>
<dbReference type="RefSeq" id="WP_001190830.1">
    <property type="nucleotide sequence ID" value="NC_003923.1"/>
</dbReference>
<dbReference type="SMR" id="Q8NVI5"/>
<dbReference type="KEGG" id="sam:MW1989"/>
<dbReference type="HOGENOM" id="CLU_090336_11_1_9"/>
<dbReference type="GO" id="GO:0005524">
    <property type="term" value="F:ATP binding"/>
    <property type="evidence" value="ECO:0007669"/>
    <property type="project" value="UniProtKB-KW"/>
</dbReference>
<dbReference type="GO" id="GO:0106310">
    <property type="term" value="F:protein serine kinase activity"/>
    <property type="evidence" value="ECO:0007669"/>
    <property type="project" value="RHEA"/>
</dbReference>
<dbReference type="GO" id="GO:0004674">
    <property type="term" value="F:protein serine/threonine kinase activity"/>
    <property type="evidence" value="ECO:0007669"/>
    <property type="project" value="UniProtKB-KW"/>
</dbReference>
<dbReference type="GO" id="GO:0016989">
    <property type="term" value="F:sigma factor antagonist activity"/>
    <property type="evidence" value="ECO:0007669"/>
    <property type="project" value="InterPro"/>
</dbReference>
<dbReference type="CDD" id="cd16936">
    <property type="entry name" value="HATPase_RsbW-like"/>
    <property type="match status" value="1"/>
</dbReference>
<dbReference type="Gene3D" id="3.30.565.10">
    <property type="entry name" value="Histidine kinase-like ATPase, C-terminal domain"/>
    <property type="match status" value="1"/>
</dbReference>
<dbReference type="HAMAP" id="MF_00638">
    <property type="entry name" value="Anti_sigma_B"/>
    <property type="match status" value="1"/>
</dbReference>
<dbReference type="InterPro" id="IPR050267">
    <property type="entry name" value="Anti-sigma-factor_SerPK"/>
</dbReference>
<dbReference type="InterPro" id="IPR036890">
    <property type="entry name" value="HATPase_C_sf"/>
</dbReference>
<dbReference type="InterPro" id="IPR010193">
    <property type="entry name" value="RsbW"/>
</dbReference>
<dbReference type="NCBIfam" id="NF003144">
    <property type="entry name" value="PRK04069.1"/>
    <property type="match status" value="1"/>
</dbReference>
<dbReference type="NCBIfam" id="TIGR01924">
    <property type="entry name" value="rsbW_low_gc"/>
    <property type="match status" value="1"/>
</dbReference>
<dbReference type="PANTHER" id="PTHR35526">
    <property type="entry name" value="ANTI-SIGMA-F FACTOR RSBW-RELATED"/>
    <property type="match status" value="1"/>
</dbReference>
<dbReference type="PANTHER" id="PTHR35526:SF9">
    <property type="entry name" value="SERINE-PROTEIN KINASE RSBW"/>
    <property type="match status" value="1"/>
</dbReference>
<dbReference type="Pfam" id="PF13581">
    <property type="entry name" value="HATPase_c_2"/>
    <property type="match status" value="1"/>
</dbReference>
<dbReference type="SUPFAM" id="SSF55874">
    <property type="entry name" value="ATPase domain of HSP90 chaperone/DNA topoisomerase II/histidine kinase"/>
    <property type="match status" value="1"/>
</dbReference>
<comment type="function">
    <text evidence="1">Negative regulator of sigma-B activity. Phosphorylates and inactivates its specific antagonist protein, RsbV. Upon phosphorylation of RsbV, RsbW is released and binds to sigma-B, thereby blocking its ability to form an RNA polymerase holoenzyme (E-sigma-B).</text>
</comment>
<comment type="catalytic activity">
    <reaction evidence="1">
        <text>L-seryl-[protein] + ATP = O-phospho-L-seryl-[protein] + ADP + H(+)</text>
        <dbReference type="Rhea" id="RHEA:17989"/>
        <dbReference type="Rhea" id="RHEA-COMP:9863"/>
        <dbReference type="Rhea" id="RHEA-COMP:11604"/>
        <dbReference type="ChEBI" id="CHEBI:15378"/>
        <dbReference type="ChEBI" id="CHEBI:29999"/>
        <dbReference type="ChEBI" id="CHEBI:30616"/>
        <dbReference type="ChEBI" id="CHEBI:83421"/>
        <dbReference type="ChEBI" id="CHEBI:456216"/>
        <dbReference type="EC" id="2.7.11.1"/>
    </reaction>
</comment>
<comment type="catalytic activity">
    <reaction evidence="1">
        <text>L-threonyl-[protein] + ATP = O-phospho-L-threonyl-[protein] + ADP + H(+)</text>
        <dbReference type="Rhea" id="RHEA:46608"/>
        <dbReference type="Rhea" id="RHEA-COMP:11060"/>
        <dbReference type="Rhea" id="RHEA-COMP:11605"/>
        <dbReference type="ChEBI" id="CHEBI:15378"/>
        <dbReference type="ChEBI" id="CHEBI:30013"/>
        <dbReference type="ChEBI" id="CHEBI:30616"/>
        <dbReference type="ChEBI" id="CHEBI:61977"/>
        <dbReference type="ChEBI" id="CHEBI:456216"/>
        <dbReference type="EC" id="2.7.11.1"/>
    </reaction>
</comment>
<comment type="similarity">
    <text evidence="1">Belongs to the anti-sigma-factor family.</text>
</comment>
<keyword id="KW-0067">ATP-binding</keyword>
<keyword id="KW-0418">Kinase</keyword>
<keyword id="KW-0547">Nucleotide-binding</keyword>
<keyword id="KW-0723">Serine/threonine-protein kinase</keyword>
<keyword id="KW-0808">Transferase</keyword>
<accession>Q8NVI5</accession>
<feature type="chain" id="PRO_0000203543" description="Serine-protein kinase RsbW">
    <location>
        <begin position="1"/>
        <end position="159"/>
    </location>
</feature>
<sequence>MQSKEDFIEMRVPASAEYVSLIRLTLSGVFSRAGATYDDIEDAKIAVSEAVTNAVKHAYKENNNVGIINIYFEILEDKIKIVISDKGDSFDYETTKSKIGPYDKNENIDFLREGGLGLFLIESLMDEVTVYKESGVTISMTKYIKKEQVRNNGERVEIS</sequence>
<name>RSBW_STAAW</name>
<organism>
    <name type="scientific">Staphylococcus aureus (strain MW2)</name>
    <dbReference type="NCBI Taxonomy" id="196620"/>
    <lineage>
        <taxon>Bacteria</taxon>
        <taxon>Bacillati</taxon>
        <taxon>Bacillota</taxon>
        <taxon>Bacilli</taxon>
        <taxon>Bacillales</taxon>
        <taxon>Staphylococcaceae</taxon>
        <taxon>Staphylococcus</taxon>
    </lineage>
</organism>
<gene>
    <name evidence="1" type="primary">rsbW</name>
    <name type="ordered locus">MW1989</name>
</gene>
<protein>
    <recommendedName>
        <fullName evidence="1">Serine-protein kinase RsbW</fullName>
        <ecNumber evidence="1">2.7.11.1</ecNumber>
    </recommendedName>
    <alternativeName>
        <fullName evidence="1">Anti-sigma-B factor</fullName>
    </alternativeName>
    <alternativeName>
        <fullName evidence="1">Sigma-B negative effector RsbW</fullName>
    </alternativeName>
</protein>
<reference key="1">
    <citation type="journal article" date="2002" name="Lancet">
        <title>Genome and virulence determinants of high virulence community-acquired MRSA.</title>
        <authorList>
            <person name="Baba T."/>
            <person name="Takeuchi F."/>
            <person name="Kuroda M."/>
            <person name="Yuzawa H."/>
            <person name="Aoki K."/>
            <person name="Oguchi A."/>
            <person name="Nagai Y."/>
            <person name="Iwama N."/>
            <person name="Asano K."/>
            <person name="Naimi T."/>
            <person name="Kuroda H."/>
            <person name="Cui L."/>
            <person name="Yamamoto K."/>
            <person name="Hiramatsu K."/>
        </authorList>
    </citation>
    <scope>NUCLEOTIDE SEQUENCE [LARGE SCALE GENOMIC DNA]</scope>
    <source>
        <strain>MW2</strain>
    </source>
</reference>
<evidence type="ECO:0000255" key="1">
    <source>
        <dbReference type="HAMAP-Rule" id="MF_00638"/>
    </source>
</evidence>
<proteinExistence type="inferred from homology"/>